<reference key="1">
    <citation type="journal article" date="2006" name="Genome Res.">
        <title>Massive genome erosion and functional adaptations provide insights into the symbiotic lifestyle of Sodalis glossinidius in the tsetse host.</title>
        <authorList>
            <person name="Toh H."/>
            <person name="Weiss B.L."/>
            <person name="Perkin S.A.H."/>
            <person name="Yamashita A."/>
            <person name="Oshima K."/>
            <person name="Hattori M."/>
            <person name="Aksoy S."/>
        </authorList>
    </citation>
    <scope>NUCLEOTIDE SEQUENCE [LARGE SCALE GENOMIC DNA]</scope>
    <source>
        <strain>morsitans</strain>
    </source>
</reference>
<comment type="function">
    <text evidence="1">F(1)F(0) ATP synthase produces ATP from ADP in the presence of a proton or sodium gradient. F-type ATPases consist of two structural domains, F(1) containing the extramembraneous catalytic core and F(0) containing the membrane proton channel, linked together by a central stalk and a peripheral stalk. During catalysis, ATP synthesis in the catalytic domain of F(1) is coupled via a rotary mechanism of the central stalk subunits to proton translocation.</text>
</comment>
<comment type="function">
    <text evidence="1">This protein is part of the stalk that links CF(0) to CF(1). It either transmits conformational changes from CF(0) to CF(1) or is implicated in proton conduction.</text>
</comment>
<comment type="subunit">
    <text evidence="1">F-type ATPases have 2 components, F(1) - the catalytic core - and F(0) - the membrane proton channel. F(1) has five subunits: alpha(3), beta(3), gamma(1), delta(1), epsilon(1). F(0) has three main subunits: a(1), b(2) and c(10-14). The alpha and beta chains form an alternating ring which encloses part of the gamma chain. F(1) is attached to F(0) by a central stalk formed by the gamma and epsilon chains, while a peripheral stalk is formed by the delta and b chains.</text>
</comment>
<comment type="subcellular location">
    <subcellularLocation>
        <location evidence="1">Cell inner membrane</location>
        <topology evidence="1">Peripheral membrane protein</topology>
    </subcellularLocation>
</comment>
<comment type="similarity">
    <text evidence="1">Belongs to the ATPase delta chain family.</text>
</comment>
<sequence length="177" mass="19323">MSELVTVARPYAKAAFDFAVEHQAVAHWQAMLTFCAEVSRNERIAELLSGAVVPEKLAETFIAVCGEELDAAGQNLIRVMAENGRLTVLPDVLEQFTLWRAAQEATVEVDVISASTLKEEQLAKISAAMEQRLSRKVKLNCKIDKSVVAGVVIRAGDMVIDGSVRGRLERLADVLQS</sequence>
<protein>
    <recommendedName>
        <fullName evidence="1">ATP synthase subunit delta</fullName>
    </recommendedName>
    <alternativeName>
        <fullName evidence="1">ATP synthase F(1) sector subunit delta</fullName>
    </alternativeName>
    <alternativeName>
        <fullName evidence="1">F-type ATPase subunit delta</fullName>
        <shortName evidence="1">F-ATPase subunit delta</shortName>
    </alternativeName>
</protein>
<dbReference type="EMBL" id="AP008232">
    <property type="protein sequence ID" value="BAE75686.1"/>
    <property type="molecule type" value="Genomic_DNA"/>
</dbReference>
<dbReference type="RefSeq" id="WP_011412216.1">
    <property type="nucleotide sequence ID" value="NC_007712.1"/>
</dbReference>
<dbReference type="SMR" id="Q2NQ89"/>
<dbReference type="STRING" id="343509.SG2411"/>
<dbReference type="KEGG" id="sgl:SG2411"/>
<dbReference type="eggNOG" id="COG0712">
    <property type="taxonomic scope" value="Bacteria"/>
</dbReference>
<dbReference type="HOGENOM" id="CLU_085114_3_0_6"/>
<dbReference type="OrthoDB" id="9816221at2"/>
<dbReference type="BioCyc" id="SGLO343509:SGP1_RS21870-MONOMER"/>
<dbReference type="Proteomes" id="UP000001932">
    <property type="component" value="Chromosome"/>
</dbReference>
<dbReference type="GO" id="GO:0005886">
    <property type="term" value="C:plasma membrane"/>
    <property type="evidence" value="ECO:0007669"/>
    <property type="project" value="UniProtKB-SubCell"/>
</dbReference>
<dbReference type="GO" id="GO:0045259">
    <property type="term" value="C:proton-transporting ATP synthase complex"/>
    <property type="evidence" value="ECO:0007669"/>
    <property type="project" value="UniProtKB-KW"/>
</dbReference>
<dbReference type="GO" id="GO:0046933">
    <property type="term" value="F:proton-transporting ATP synthase activity, rotational mechanism"/>
    <property type="evidence" value="ECO:0007669"/>
    <property type="project" value="UniProtKB-UniRule"/>
</dbReference>
<dbReference type="Gene3D" id="1.10.520.20">
    <property type="entry name" value="N-terminal domain of the delta subunit of the F1F0-ATP synthase"/>
    <property type="match status" value="1"/>
</dbReference>
<dbReference type="HAMAP" id="MF_01416">
    <property type="entry name" value="ATP_synth_delta_bact"/>
    <property type="match status" value="1"/>
</dbReference>
<dbReference type="InterPro" id="IPR026015">
    <property type="entry name" value="ATP_synth_OSCP/delta_N_sf"/>
</dbReference>
<dbReference type="InterPro" id="IPR020781">
    <property type="entry name" value="ATPase_OSCP/d_CS"/>
</dbReference>
<dbReference type="InterPro" id="IPR000711">
    <property type="entry name" value="ATPase_OSCP/dsu"/>
</dbReference>
<dbReference type="NCBIfam" id="TIGR01145">
    <property type="entry name" value="ATP_synt_delta"/>
    <property type="match status" value="1"/>
</dbReference>
<dbReference type="NCBIfam" id="NF004402">
    <property type="entry name" value="PRK05758.2-2"/>
    <property type="match status" value="1"/>
</dbReference>
<dbReference type="NCBIfam" id="NF004404">
    <property type="entry name" value="PRK05758.2-5"/>
    <property type="match status" value="1"/>
</dbReference>
<dbReference type="PANTHER" id="PTHR11910">
    <property type="entry name" value="ATP SYNTHASE DELTA CHAIN"/>
    <property type="match status" value="1"/>
</dbReference>
<dbReference type="Pfam" id="PF00213">
    <property type="entry name" value="OSCP"/>
    <property type="match status" value="1"/>
</dbReference>
<dbReference type="PRINTS" id="PR00125">
    <property type="entry name" value="ATPASEDELTA"/>
</dbReference>
<dbReference type="SUPFAM" id="SSF47928">
    <property type="entry name" value="N-terminal domain of the delta subunit of the F1F0-ATP synthase"/>
    <property type="match status" value="1"/>
</dbReference>
<dbReference type="PROSITE" id="PS00389">
    <property type="entry name" value="ATPASE_DELTA"/>
    <property type="match status" value="1"/>
</dbReference>
<proteinExistence type="inferred from homology"/>
<evidence type="ECO:0000255" key="1">
    <source>
        <dbReference type="HAMAP-Rule" id="MF_01416"/>
    </source>
</evidence>
<feature type="chain" id="PRO_0000371146" description="ATP synthase subunit delta">
    <location>
        <begin position="1"/>
        <end position="177"/>
    </location>
</feature>
<gene>
    <name evidence="1" type="primary">atpH</name>
    <name type="ordered locus">SG2411</name>
</gene>
<keyword id="KW-0066">ATP synthesis</keyword>
<keyword id="KW-0997">Cell inner membrane</keyword>
<keyword id="KW-1003">Cell membrane</keyword>
<keyword id="KW-0139">CF(1)</keyword>
<keyword id="KW-0375">Hydrogen ion transport</keyword>
<keyword id="KW-0406">Ion transport</keyword>
<keyword id="KW-0472">Membrane</keyword>
<keyword id="KW-0813">Transport</keyword>
<name>ATPD_SODGM</name>
<organism>
    <name type="scientific">Sodalis glossinidius (strain morsitans)</name>
    <dbReference type="NCBI Taxonomy" id="343509"/>
    <lineage>
        <taxon>Bacteria</taxon>
        <taxon>Pseudomonadati</taxon>
        <taxon>Pseudomonadota</taxon>
        <taxon>Gammaproteobacteria</taxon>
        <taxon>Enterobacterales</taxon>
        <taxon>Bruguierivoracaceae</taxon>
        <taxon>Sodalis</taxon>
    </lineage>
</organism>
<accession>Q2NQ89</accession>